<accession>O74757</accession>
<reference key="1">
    <citation type="journal article" date="2002" name="Nature">
        <title>The genome sequence of Schizosaccharomyces pombe.</title>
        <authorList>
            <person name="Wood V."/>
            <person name="Gwilliam R."/>
            <person name="Rajandream M.A."/>
            <person name="Lyne M.H."/>
            <person name="Lyne R."/>
            <person name="Stewart A."/>
            <person name="Sgouros J.G."/>
            <person name="Peat N."/>
            <person name="Hayles J."/>
            <person name="Baker S.G."/>
            <person name="Basham D."/>
            <person name="Bowman S."/>
            <person name="Brooks K."/>
            <person name="Brown D."/>
            <person name="Brown S."/>
            <person name="Chillingworth T."/>
            <person name="Churcher C.M."/>
            <person name="Collins M."/>
            <person name="Connor R."/>
            <person name="Cronin A."/>
            <person name="Davis P."/>
            <person name="Feltwell T."/>
            <person name="Fraser A."/>
            <person name="Gentles S."/>
            <person name="Goble A."/>
            <person name="Hamlin N."/>
            <person name="Harris D.E."/>
            <person name="Hidalgo J."/>
            <person name="Hodgson G."/>
            <person name="Holroyd S."/>
            <person name="Hornsby T."/>
            <person name="Howarth S."/>
            <person name="Huckle E.J."/>
            <person name="Hunt S."/>
            <person name="Jagels K."/>
            <person name="James K.D."/>
            <person name="Jones L."/>
            <person name="Jones M."/>
            <person name="Leather S."/>
            <person name="McDonald S."/>
            <person name="McLean J."/>
            <person name="Mooney P."/>
            <person name="Moule S."/>
            <person name="Mungall K.L."/>
            <person name="Murphy L.D."/>
            <person name="Niblett D."/>
            <person name="Odell C."/>
            <person name="Oliver K."/>
            <person name="O'Neil S."/>
            <person name="Pearson D."/>
            <person name="Quail M.A."/>
            <person name="Rabbinowitsch E."/>
            <person name="Rutherford K.M."/>
            <person name="Rutter S."/>
            <person name="Saunders D."/>
            <person name="Seeger K."/>
            <person name="Sharp S."/>
            <person name="Skelton J."/>
            <person name="Simmonds M.N."/>
            <person name="Squares R."/>
            <person name="Squares S."/>
            <person name="Stevens K."/>
            <person name="Taylor K."/>
            <person name="Taylor R.G."/>
            <person name="Tivey A."/>
            <person name="Walsh S.V."/>
            <person name="Warren T."/>
            <person name="Whitehead S."/>
            <person name="Woodward J.R."/>
            <person name="Volckaert G."/>
            <person name="Aert R."/>
            <person name="Robben J."/>
            <person name="Grymonprez B."/>
            <person name="Weltjens I."/>
            <person name="Vanstreels E."/>
            <person name="Rieger M."/>
            <person name="Schaefer M."/>
            <person name="Mueller-Auer S."/>
            <person name="Gabel C."/>
            <person name="Fuchs M."/>
            <person name="Duesterhoeft A."/>
            <person name="Fritzc C."/>
            <person name="Holzer E."/>
            <person name="Moestl D."/>
            <person name="Hilbert H."/>
            <person name="Borzym K."/>
            <person name="Langer I."/>
            <person name="Beck A."/>
            <person name="Lehrach H."/>
            <person name="Reinhardt R."/>
            <person name="Pohl T.M."/>
            <person name="Eger P."/>
            <person name="Zimmermann W."/>
            <person name="Wedler H."/>
            <person name="Wambutt R."/>
            <person name="Purnelle B."/>
            <person name="Goffeau A."/>
            <person name="Cadieu E."/>
            <person name="Dreano S."/>
            <person name="Gloux S."/>
            <person name="Lelaure V."/>
            <person name="Mottier S."/>
            <person name="Galibert F."/>
            <person name="Aves S.J."/>
            <person name="Xiang Z."/>
            <person name="Hunt C."/>
            <person name="Moore K."/>
            <person name="Hurst S.M."/>
            <person name="Lucas M."/>
            <person name="Rochet M."/>
            <person name="Gaillardin C."/>
            <person name="Tallada V.A."/>
            <person name="Garzon A."/>
            <person name="Thode G."/>
            <person name="Daga R.R."/>
            <person name="Cruzado L."/>
            <person name="Jimenez J."/>
            <person name="Sanchez M."/>
            <person name="del Rey F."/>
            <person name="Benito J."/>
            <person name="Dominguez A."/>
            <person name="Revuelta J.L."/>
            <person name="Moreno S."/>
            <person name="Armstrong J."/>
            <person name="Forsburg S.L."/>
            <person name="Cerutti L."/>
            <person name="Lowe T."/>
            <person name="McCombie W.R."/>
            <person name="Paulsen I."/>
            <person name="Potashkin J."/>
            <person name="Shpakovski G.V."/>
            <person name="Ussery D."/>
            <person name="Barrell B.G."/>
            <person name="Nurse P."/>
        </authorList>
    </citation>
    <scope>NUCLEOTIDE SEQUENCE [LARGE SCALE GENOMIC DNA]</scope>
    <source>
        <strain>972 / ATCC 24843</strain>
    </source>
</reference>
<reference key="2">
    <citation type="journal article" date="2008" name="J. Proteome Res.">
        <title>Phosphoproteome analysis of fission yeast.</title>
        <authorList>
            <person name="Wilson-Grady J.T."/>
            <person name="Villen J."/>
            <person name="Gygi S.P."/>
        </authorList>
    </citation>
    <scope>PHOSPHORYLATION [LARGE SCALE ANALYSIS] AT SER-367</scope>
    <scope>IDENTIFICATION BY MASS SPECTROMETRY</scope>
</reference>
<reference key="3">
    <citation type="journal article" date="2009" name="J. Biol. Chem.">
        <title>Degradation of sterol regulatory element-binding protein precursor requires the endoplasmic reticulum-associated degradation components Ubc7 and Hrd1 in fission yeast.</title>
        <authorList>
            <person name="Hughes B.T."/>
            <person name="Nwosu C.C."/>
            <person name="Espenshade P.J."/>
        </authorList>
    </citation>
    <scope>FUNCTION</scope>
    <scope>INTERACTION WITH SRE1</scope>
</reference>
<dbReference type="EC" id="2.3.2.27"/>
<dbReference type="EMBL" id="CU329671">
    <property type="protein sequence ID" value="CAA21073.1"/>
    <property type="molecule type" value="Genomic_DNA"/>
</dbReference>
<dbReference type="PIR" id="T39713">
    <property type="entry name" value="T39713"/>
</dbReference>
<dbReference type="RefSeq" id="NP_596376.1">
    <property type="nucleotide sequence ID" value="NM_001022297.2"/>
</dbReference>
<dbReference type="SMR" id="O74757"/>
<dbReference type="BioGRID" id="276446">
    <property type="interactions" value="27"/>
</dbReference>
<dbReference type="FunCoup" id="O74757">
    <property type="interactions" value="657"/>
</dbReference>
<dbReference type="STRING" id="284812.O74757"/>
<dbReference type="iPTMnet" id="O74757"/>
<dbReference type="PaxDb" id="4896-SPBC17D11.02c.1"/>
<dbReference type="EnsemblFungi" id="SPBC17D11.02c.1">
    <property type="protein sequence ID" value="SPBC17D11.02c.1:pep"/>
    <property type="gene ID" value="SPBC17D11.02c"/>
</dbReference>
<dbReference type="GeneID" id="2539900"/>
<dbReference type="KEGG" id="spo:2539900"/>
<dbReference type="PomBase" id="SPBC17D11.02c">
    <property type="gene designation" value="hrd1"/>
</dbReference>
<dbReference type="VEuPathDB" id="FungiDB:SPBC17D11.02c"/>
<dbReference type="eggNOG" id="KOG0802">
    <property type="taxonomic scope" value="Eukaryota"/>
</dbReference>
<dbReference type="HOGENOM" id="CLU_436256_0_0_1"/>
<dbReference type="InParanoid" id="O74757"/>
<dbReference type="OMA" id="PGMGAPF"/>
<dbReference type="PhylomeDB" id="O74757"/>
<dbReference type="Reactome" id="R-SPO-5358346">
    <property type="pathway name" value="Hedgehog ligand biogenesis"/>
</dbReference>
<dbReference type="UniPathway" id="UPA00143"/>
<dbReference type="PRO" id="PR:O74757"/>
<dbReference type="Proteomes" id="UP000002485">
    <property type="component" value="Chromosome II"/>
</dbReference>
<dbReference type="GO" id="GO:0005938">
    <property type="term" value="C:cell cortex"/>
    <property type="evidence" value="ECO:0007005"/>
    <property type="project" value="PomBase"/>
</dbReference>
<dbReference type="GO" id="GO:0012505">
    <property type="term" value="C:endomembrane system"/>
    <property type="evidence" value="ECO:0000318"/>
    <property type="project" value="GO_Central"/>
</dbReference>
<dbReference type="GO" id="GO:0000836">
    <property type="term" value="C:Hrd1p ubiquitin ligase complex"/>
    <property type="evidence" value="ECO:0000266"/>
    <property type="project" value="PomBase"/>
</dbReference>
<dbReference type="GO" id="GO:0061630">
    <property type="term" value="F:ubiquitin protein ligase activity"/>
    <property type="evidence" value="ECO:0000314"/>
    <property type="project" value="PomBase"/>
</dbReference>
<dbReference type="GO" id="GO:0008270">
    <property type="term" value="F:zinc ion binding"/>
    <property type="evidence" value="ECO:0000255"/>
    <property type="project" value="PomBase"/>
</dbReference>
<dbReference type="GO" id="GO:0036503">
    <property type="term" value="P:ERAD pathway"/>
    <property type="evidence" value="ECO:0000315"/>
    <property type="project" value="PomBase"/>
</dbReference>
<dbReference type="GO" id="GO:0043161">
    <property type="term" value="P:proteasome-mediated ubiquitin-dependent protein catabolic process"/>
    <property type="evidence" value="ECO:0000318"/>
    <property type="project" value="GO_Central"/>
</dbReference>
<dbReference type="GO" id="GO:0016567">
    <property type="term" value="P:protein ubiquitination"/>
    <property type="evidence" value="ECO:0007669"/>
    <property type="project" value="UniProtKB-UniPathway"/>
</dbReference>
<dbReference type="CDD" id="cd16479">
    <property type="entry name" value="RING-H2_synoviolin"/>
    <property type="match status" value="1"/>
</dbReference>
<dbReference type="Gene3D" id="3.30.40.10">
    <property type="entry name" value="Zinc/RING finger domain, C3HC4 (zinc finger)"/>
    <property type="match status" value="1"/>
</dbReference>
<dbReference type="InterPro" id="IPR050731">
    <property type="entry name" value="HRD1_E3_ubiq-ligases"/>
</dbReference>
<dbReference type="InterPro" id="IPR001841">
    <property type="entry name" value="Znf_RING"/>
</dbReference>
<dbReference type="InterPro" id="IPR013083">
    <property type="entry name" value="Znf_RING/FYVE/PHD"/>
</dbReference>
<dbReference type="InterPro" id="IPR024766">
    <property type="entry name" value="Znf_RING_H2"/>
</dbReference>
<dbReference type="PANTHER" id="PTHR22763:SF184">
    <property type="entry name" value="E3 UBIQUITIN-PROTEIN LIGASE SYNOVIOLIN"/>
    <property type="match status" value="1"/>
</dbReference>
<dbReference type="PANTHER" id="PTHR22763">
    <property type="entry name" value="RING ZINC FINGER PROTEIN"/>
    <property type="match status" value="1"/>
</dbReference>
<dbReference type="Pfam" id="PF12678">
    <property type="entry name" value="zf-rbx1"/>
    <property type="match status" value="1"/>
</dbReference>
<dbReference type="SMART" id="SM00184">
    <property type="entry name" value="RING"/>
    <property type="match status" value="1"/>
</dbReference>
<dbReference type="SUPFAM" id="SSF57850">
    <property type="entry name" value="RING/U-box"/>
    <property type="match status" value="1"/>
</dbReference>
<dbReference type="PROSITE" id="PS50089">
    <property type="entry name" value="ZF_RING_2"/>
    <property type="match status" value="1"/>
</dbReference>
<evidence type="ECO:0000250" key="1"/>
<evidence type="ECO:0000255" key="2"/>
<evidence type="ECO:0000255" key="3">
    <source>
        <dbReference type="PROSITE-ProRule" id="PRU00175"/>
    </source>
</evidence>
<evidence type="ECO:0000256" key="4">
    <source>
        <dbReference type="SAM" id="MobiDB-lite"/>
    </source>
</evidence>
<evidence type="ECO:0000269" key="5">
    <source>
    </source>
</evidence>
<evidence type="ECO:0000269" key="6">
    <source>
    </source>
</evidence>
<evidence type="ECO:0000305" key="7"/>
<comment type="function">
    <text evidence="1 6">E3 ubiquitin-protein ligase which accepts ubiquitin specifically from endoplasmic reticulum-associated E2 ligases, and transfers it to substrates promoting their degradation. Mediates the degradation of endoplasmic reticulum proteins (ERQC), also called ER-associated degradation (ERAD). Component of the hrd1 ubiquitin ligase complex, which is part of the ERAD-L and ERAD-M pathways responsible for the rapid degradation of soluble lumenal and membrane proteins with misfolded lumenal domains (ERAD-L), or ER-membrane proteins with misfolded transmembrane domains (ERAD-M) (By similarity). Together with ubc7, required for the degradation of the transcription factor sre1 precursor in the absence of its binding partner scp1.</text>
</comment>
<comment type="catalytic activity">
    <reaction>
        <text>S-ubiquitinyl-[E2 ubiquitin-conjugating enzyme]-L-cysteine + [acceptor protein]-L-lysine = [E2 ubiquitin-conjugating enzyme]-L-cysteine + N(6)-ubiquitinyl-[acceptor protein]-L-lysine.</text>
        <dbReference type="EC" id="2.3.2.27"/>
    </reaction>
</comment>
<comment type="pathway">
    <text>Protein modification; protein ubiquitination.</text>
</comment>
<comment type="subcellular location">
    <subcellularLocation>
        <location evidence="7">Endoplasmic reticulum membrane</location>
        <topology evidence="7">Multi-pass membrane protein</topology>
    </subcellularLocation>
</comment>
<comment type="similarity">
    <text evidence="7">Belongs to the HRD1 family.</text>
</comment>
<feature type="chain" id="PRO_0000358324" description="ERAD-associated E3 ubiquitin-protein ligase hrd1">
    <location>
        <begin position="1"/>
        <end position="677"/>
    </location>
</feature>
<feature type="topological domain" description="Cytoplasmic" evidence="1">
    <location>
        <begin position="1"/>
        <end position="2"/>
    </location>
</feature>
<feature type="transmembrane region" description="Helical" evidence="2">
    <location>
        <begin position="3"/>
        <end position="23"/>
    </location>
</feature>
<feature type="topological domain" description="Lumenal" evidence="1">
    <location>
        <begin position="24"/>
        <end position="39"/>
    </location>
</feature>
<feature type="transmembrane region" description="Helical" evidence="2">
    <location>
        <begin position="40"/>
        <end position="60"/>
    </location>
</feature>
<feature type="topological domain" description="Cytoplasmic" evidence="1">
    <location>
        <begin position="61"/>
        <end position="86"/>
    </location>
</feature>
<feature type="transmembrane region" description="Helical" evidence="2">
    <location>
        <begin position="87"/>
        <end position="107"/>
    </location>
</feature>
<feature type="topological domain" description="Lumenal" evidence="1">
    <location>
        <begin position="108"/>
        <end position="140"/>
    </location>
</feature>
<feature type="transmembrane region" description="Helical" evidence="2">
    <location>
        <begin position="141"/>
        <end position="161"/>
    </location>
</feature>
<feature type="topological domain" description="Cytoplasmic" evidence="1">
    <location>
        <begin position="162"/>
        <end position="171"/>
    </location>
</feature>
<feature type="transmembrane region" description="Helical" evidence="2">
    <location>
        <begin position="172"/>
        <end position="192"/>
    </location>
</feature>
<feature type="topological domain" description="Lumenal" evidence="1">
    <location>
        <begin position="193"/>
        <end position="225"/>
    </location>
</feature>
<feature type="transmembrane region" description="Helical" evidence="2">
    <location>
        <begin position="226"/>
        <end position="246"/>
    </location>
</feature>
<feature type="topological domain" description="Cytoplasmic" evidence="1">
    <location>
        <begin position="247"/>
        <end position="677"/>
    </location>
</feature>
<feature type="zinc finger region" description="RING-type; atypical" evidence="3">
    <location>
        <begin position="292"/>
        <end position="351"/>
    </location>
</feature>
<feature type="region of interest" description="Disordered" evidence="4">
    <location>
        <begin position="379"/>
        <end position="404"/>
    </location>
</feature>
<feature type="region of interest" description="Disordered" evidence="4">
    <location>
        <begin position="447"/>
        <end position="488"/>
    </location>
</feature>
<feature type="region of interest" description="Disordered" evidence="4">
    <location>
        <begin position="620"/>
        <end position="677"/>
    </location>
</feature>
<feature type="compositionally biased region" description="Low complexity" evidence="4">
    <location>
        <begin position="379"/>
        <end position="392"/>
    </location>
</feature>
<feature type="compositionally biased region" description="Polar residues" evidence="4">
    <location>
        <begin position="394"/>
        <end position="404"/>
    </location>
</feature>
<feature type="compositionally biased region" description="Low complexity" evidence="4">
    <location>
        <begin position="455"/>
        <end position="469"/>
    </location>
</feature>
<feature type="compositionally biased region" description="Polar residues" evidence="4">
    <location>
        <begin position="470"/>
        <end position="488"/>
    </location>
</feature>
<feature type="compositionally biased region" description="Polar residues" evidence="4">
    <location>
        <begin position="620"/>
        <end position="656"/>
    </location>
</feature>
<feature type="modified residue" description="Phosphoserine" evidence="5">
    <location>
        <position position="367"/>
    </location>
</feature>
<protein>
    <recommendedName>
        <fullName>ERAD-associated E3 ubiquitin-protein ligase hrd1</fullName>
        <ecNumber>2.3.2.27</ecNumber>
    </recommendedName>
    <alternativeName>
        <fullName evidence="7">RING-type E3 ubiquitin transferase hrd1</fullName>
    </alternativeName>
</protein>
<gene>
    <name type="primary">hrd1</name>
    <name type="ORF">SPBC17D11.02c</name>
</gene>
<keyword id="KW-0256">Endoplasmic reticulum</keyword>
<keyword id="KW-0472">Membrane</keyword>
<keyword id="KW-0479">Metal-binding</keyword>
<keyword id="KW-0597">Phosphoprotein</keyword>
<keyword id="KW-1185">Reference proteome</keyword>
<keyword id="KW-0808">Transferase</keyword>
<keyword id="KW-0812">Transmembrane</keyword>
<keyword id="KW-1133">Transmembrane helix</keyword>
<keyword id="KW-0833">Ubl conjugation pathway</keyword>
<keyword id="KW-0862">Zinc</keyword>
<keyword id="KW-0863">Zinc-finger</keyword>
<organism>
    <name type="scientific">Schizosaccharomyces pombe (strain 972 / ATCC 24843)</name>
    <name type="common">Fission yeast</name>
    <dbReference type="NCBI Taxonomy" id="284812"/>
    <lineage>
        <taxon>Eukaryota</taxon>
        <taxon>Fungi</taxon>
        <taxon>Dikarya</taxon>
        <taxon>Ascomycota</taxon>
        <taxon>Taphrinomycotina</taxon>
        <taxon>Schizosaccharomycetes</taxon>
        <taxon>Schizosaccharomycetales</taxon>
        <taxon>Schizosaccharomycetaceae</taxon>
        <taxon>Schizosaccharomyces</taxon>
    </lineage>
</organism>
<sequence length="677" mass="75657">MKFILYVLASLVLFGLSVLLSLYSSANVYSATVMISQSPVHITIGLNVCLCLFFAIANALKTLLFGSLQTFELELLYEQFWITLTEIMLAITVFREAISISFFMLLSTLMFARVFHSICSFRTERLQIQLTDQRFHIFSRLTCAYFVLSILDASLIYLCFTSEHLGDKSTRMLFVCEFSVLLLNLTIEASKLCIYLYEARHLDQVWDEKSTYLFRLEVCRDGLRLLAYSLLFMYQFPYVSVPIYSIRQMYTCFYSLFRRIREHARFRQATRDMNAMYPTATEEQLTNSDRTCTICREEMFHPDHPPENTDEMEPLPRGLDMTPKRLPCGHILHFHCLRNWLERQQTCPICRRSVIGNQSSPTGIPASPNVRATQIATQVPNPQNTPTTTAVPGITNSSNQGDPQASTFNGVPNANSSGFAAHTQDLSSVIPRRIALRDGWTMLPIPGTRRIPTYSQSTSTTNPSATPTTGDPSNSTYGGPQTFPNSGNNPNFNRGIAGIVPPGWRLVSSNTQSLSTNSAMTSLYQNASSADNNLGSSLPNVVPLSRGLTQSNETSNTFPAASSNISSQLRELHTKIDELRETVSNFRADYNSIRTSLNQLEAASGINERIQTTSADSLLNSNGMSGTEGFENTQTSITTNDNQSSILTSSDQTSPFATDEDRQNSRNVQLETVDENF</sequence>
<name>HRD1_SCHPO</name>
<proteinExistence type="evidence at protein level"/>